<organism>
    <name type="scientific">Homo sapiens</name>
    <name type="common">Human</name>
    <dbReference type="NCBI Taxonomy" id="9606"/>
    <lineage>
        <taxon>Eukaryota</taxon>
        <taxon>Metazoa</taxon>
        <taxon>Chordata</taxon>
        <taxon>Craniata</taxon>
        <taxon>Vertebrata</taxon>
        <taxon>Euteleostomi</taxon>
        <taxon>Mammalia</taxon>
        <taxon>Eutheria</taxon>
        <taxon>Euarchontoglires</taxon>
        <taxon>Primates</taxon>
        <taxon>Haplorrhini</taxon>
        <taxon>Catarrhini</taxon>
        <taxon>Hominidae</taxon>
        <taxon>Homo</taxon>
    </lineage>
</organism>
<dbReference type="EMBL" id="CR612552">
    <property type="status" value="NOT_ANNOTATED_CDS"/>
    <property type="molecule type" value="mRNA"/>
</dbReference>
<dbReference type="EMBL" id="AC131055">
    <property type="status" value="NOT_ANNOTATED_CDS"/>
    <property type="molecule type" value="Genomic_DNA"/>
</dbReference>
<dbReference type="RefSeq" id="NP_001177381.1">
    <property type="nucleotide sequence ID" value="NM_001190452.1"/>
</dbReference>
<dbReference type="BioGRID" id="1148170">
    <property type="interactions" value="10"/>
</dbReference>
<dbReference type="STRING" id="9606.ENSP00000439228"/>
<dbReference type="BioMuta" id="MTRNR2L1"/>
<dbReference type="PaxDb" id="9606-ENSP00000439228"/>
<dbReference type="Antibodypedia" id="55175">
    <property type="antibodies" value="34 antibodies from 13 providers"/>
</dbReference>
<dbReference type="DNASU" id="100462977"/>
<dbReference type="UCSC" id="uc002gzb.3">
    <property type="organism name" value="human"/>
</dbReference>
<dbReference type="AGR" id="HGNC:37155"/>
<dbReference type="DisGeNET" id="100462977"/>
<dbReference type="GeneCards" id="MTRNR2L1"/>
<dbReference type="HGNC" id="HGNC:37155">
    <property type="gene designation" value="MTRNR2L1"/>
</dbReference>
<dbReference type="MIM" id="616985">
    <property type="type" value="gene"/>
</dbReference>
<dbReference type="neXtProt" id="NX_P0CJ68"/>
<dbReference type="VEuPathDB" id="HostDB:ENSG00000256618"/>
<dbReference type="HOGENOM" id="CLU_221584_0_0_1"/>
<dbReference type="InParanoid" id="P0CJ68"/>
<dbReference type="PAN-GO" id="P0CJ68">
    <property type="GO annotations" value="2 GO annotations based on evolutionary models"/>
</dbReference>
<dbReference type="PhylomeDB" id="P0CJ68"/>
<dbReference type="PathwayCommons" id="P0CJ68"/>
<dbReference type="SignaLink" id="P0CJ68"/>
<dbReference type="BioGRID-ORCS" id="100462977">
    <property type="hits" value="176 hits in 660 CRISPR screens"/>
</dbReference>
<dbReference type="ChiTaRS" id="MTRNR2L1">
    <property type="organism name" value="human"/>
</dbReference>
<dbReference type="GenomeRNAi" id="100462977"/>
<dbReference type="Pharos" id="P0CJ68">
    <property type="development level" value="Tdark"/>
</dbReference>
<dbReference type="PRO" id="PR:P0CJ68"/>
<dbReference type="Proteomes" id="UP000005640">
    <property type="component" value="Chromosome 17"/>
</dbReference>
<dbReference type="Bgee" id="ENSG00000256618">
    <property type="expression patterns" value="Expressed in sural nerve and 93 other cell types or tissues"/>
</dbReference>
<dbReference type="GO" id="GO:0005737">
    <property type="term" value="C:cytoplasm"/>
    <property type="evidence" value="ECO:0007669"/>
    <property type="project" value="UniProtKB-SubCell"/>
</dbReference>
<dbReference type="GO" id="GO:0005576">
    <property type="term" value="C:extracellular region"/>
    <property type="evidence" value="ECO:0007669"/>
    <property type="project" value="UniProtKB-SubCell"/>
</dbReference>
<dbReference type="GO" id="GO:0048019">
    <property type="term" value="F:receptor antagonist activity"/>
    <property type="evidence" value="ECO:0000318"/>
    <property type="project" value="GO_Central"/>
</dbReference>
<dbReference type="GO" id="GO:1900118">
    <property type="term" value="P:negative regulation of execution phase of apoptosis"/>
    <property type="evidence" value="ECO:0000318"/>
    <property type="project" value="GO_Central"/>
</dbReference>
<dbReference type="CDD" id="cd20245">
    <property type="entry name" value="humanin"/>
    <property type="match status" value="1"/>
</dbReference>
<dbReference type="InterPro" id="IPR028139">
    <property type="entry name" value="Humanin"/>
</dbReference>
<dbReference type="PANTHER" id="PTHR33895:SF18">
    <property type="entry name" value="HUMANIN-LIKE 1-RELATED"/>
    <property type="match status" value="1"/>
</dbReference>
<dbReference type="PANTHER" id="PTHR33895">
    <property type="entry name" value="HUMANIN-LIKE 4"/>
    <property type="match status" value="1"/>
</dbReference>
<dbReference type="Pfam" id="PF15040">
    <property type="entry name" value="Humanin"/>
    <property type="match status" value="1"/>
</dbReference>
<sequence>MAPRGFSCLLLSTSEIDLPVKRRT</sequence>
<accession>P0CJ68</accession>
<comment type="function">
    <text evidence="1">Plays a role as a neuroprotective and antiapoptotic factor.</text>
</comment>
<comment type="subcellular location">
    <subcellularLocation>
        <location evidence="1">Secreted</location>
    </subcellularLocation>
    <subcellularLocation>
        <location evidence="1">Cytoplasm</location>
    </subcellularLocation>
</comment>
<comment type="tissue specificity">
    <text evidence="2">Highly expressed in the kidney, heart muscle and testis.</text>
</comment>
<comment type="induction">
    <text evidence="2">Down-regulated 6 hours following staurosporine (STS) treatment and up-regulated 24 hours following STS treatment. Down-regulated 6 hours following beta-carotene treatment.</text>
</comment>
<comment type="similarity">
    <text evidence="4">Belongs to the humanin family.</text>
</comment>
<comment type="caution">
    <text evidence="5">The humanin peptide has been shown to be biologically active but is the product of a mitochondrial gene, MT-RNR2. The mechanisms allowing the production and the secretion of humanin from the mitochondrial gene remaining unclear, the possibility exist that the physiologically active humanin peptide is encoded by one of the related genes present in the nuclear genome including the one described here (PubMed:19477263).</text>
</comment>
<keyword id="KW-0963">Cytoplasm</keyword>
<keyword id="KW-1185">Reference proteome</keyword>
<keyword id="KW-0964">Secreted</keyword>
<reference key="1">
    <citation type="submission" date="2004-07" db="EMBL/GenBank/DDBJ databases">
        <title>Full-length cDNA libraries and normalization.</title>
        <authorList>
            <person name="Li W.B."/>
            <person name="Gruber C."/>
            <person name="Jessee J."/>
            <person name="Polayes D."/>
        </authorList>
    </citation>
    <scope>NUCLEOTIDE SEQUENCE [LARGE SCALE MRNA]</scope>
</reference>
<reference key="2">
    <citation type="journal article" date="2006" name="Nature">
        <title>DNA sequence of human chromosome 17 and analysis of rearrangement in the human lineage.</title>
        <authorList>
            <person name="Zody M.C."/>
            <person name="Garber M."/>
            <person name="Adams D.J."/>
            <person name="Sharpe T."/>
            <person name="Harrow J."/>
            <person name="Lupski J.R."/>
            <person name="Nicholson C."/>
            <person name="Searle S.M."/>
            <person name="Wilming L."/>
            <person name="Young S.K."/>
            <person name="Abouelleil A."/>
            <person name="Allen N.R."/>
            <person name="Bi W."/>
            <person name="Bloom T."/>
            <person name="Borowsky M.L."/>
            <person name="Bugalter B.E."/>
            <person name="Butler J."/>
            <person name="Chang J.L."/>
            <person name="Chen C.-K."/>
            <person name="Cook A."/>
            <person name="Corum B."/>
            <person name="Cuomo C.A."/>
            <person name="de Jong P.J."/>
            <person name="DeCaprio D."/>
            <person name="Dewar K."/>
            <person name="FitzGerald M."/>
            <person name="Gilbert J."/>
            <person name="Gibson R."/>
            <person name="Gnerre S."/>
            <person name="Goldstein S."/>
            <person name="Grafham D.V."/>
            <person name="Grocock R."/>
            <person name="Hafez N."/>
            <person name="Hagopian D.S."/>
            <person name="Hart E."/>
            <person name="Norman C.H."/>
            <person name="Humphray S."/>
            <person name="Jaffe D.B."/>
            <person name="Jones M."/>
            <person name="Kamal M."/>
            <person name="Khodiyar V.K."/>
            <person name="LaButti K."/>
            <person name="Laird G."/>
            <person name="Lehoczky J."/>
            <person name="Liu X."/>
            <person name="Lokyitsang T."/>
            <person name="Loveland J."/>
            <person name="Lui A."/>
            <person name="Macdonald P."/>
            <person name="Major J.E."/>
            <person name="Matthews L."/>
            <person name="Mauceli E."/>
            <person name="McCarroll S.A."/>
            <person name="Mihalev A.H."/>
            <person name="Mudge J."/>
            <person name="Nguyen C."/>
            <person name="Nicol R."/>
            <person name="O'Leary S.B."/>
            <person name="Osoegawa K."/>
            <person name="Schwartz D.C."/>
            <person name="Shaw-Smith C."/>
            <person name="Stankiewicz P."/>
            <person name="Steward C."/>
            <person name="Swarbreck D."/>
            <person name="Venkataraman V."/>
            <person name="Whittaker C.A."/>
            <person name="Yang X."/>
            <person name="Zimmer A.R."/>
            <person name="Bradley A."/>
            <person name="Hubbard T."/>
            <person name="Birren B.W."/>
            <person name="Rogers J."/>
            <person name="Lander E.S."/>
            <person name="Nusbaum C."/>
        </authorList>
    </citation>
    <scope>NUCLEOTIDE SEQUENCE [LARGE SCALE GENOMIC DNA]</scope>
</reference>
<reference key="3">
    <citation type="journal article" date="2009" name="Genomics">
        <title>Evidence for potential functionality of nuclearly-encoded humanin isoforms.</title>
        <authorList>
            <person name="Bodzioch M."/>
            <person name="Lapicka-Bodzioch K."/>
            <person name="Zapala B."/>
            <person name="Kamysz W."/>
            <person name="Kiec-Wilk B."/>
            <person name="Dembinska-Kiec A."/>
        </authorList>
    </citation>
    <scope>TISSUE SPECIFICITY</scope>
    <scope>INDUCTION</scope>
</reference>
<evidence type="ECO:0000250" key="1">
    <source>
        <dbReference type="UniProtKB" id="Q8IVG9"/>
    </source>
</evidence>
<evidence type="ECO:0000269" key="2">
    <source>
    </source>
</evidence>
<evidence type="ECO:0000303" key="3">
    <source>
    </source>
</evidence>
<evidence type="ECO:0000305" key="4"/>
<evidence type="ECO:0000305" key="5">
    <source>
    </source>
</evidence>
<evidence type="ECO:0000312" key="6">
    <source>
        <dbReference type="HGNC" id="HGNC:37155"/>
    </source>
</evidence>
<name>HMN1_HUMAN</name>
<protein>
    <recommendedName>
        <fullName evidence="4">Humanin-like 1</fullName>
        <shortName evidence="3">HN1</shortName>
    </recommendedName>
    <alternativeName>
        <fullName evidence="6">MT-RNR2-like protein 1</fullName>
    </alternativeName>
</protein>
<gene>
    <name evidence="6" type="primary">MTRNR2L1</name>
</gene>
<feature type="chain" id="PRO_0000404550" description="Humanin-like 1">
    <location>
        <begin position="1"/>
        <end position="24"/>
    </location>
</feature>
<proteinExistence type="evidence at transcript level"/>